<protein>
    <recommendedName>
        <fullName>Gag polyprotein</fullName>
    </recommendedName>
    <alternativeName>
        <fullName>Core polyprotein</fullName>
    </alternativeName>
    <component>
        <recommendedName>
            <fullName>Matrix protein p10</fullName>
        </recommendedName>
    </component>
    <component>
        <recommendedName>
            <fullName>Phosphorylated protein pp24</fullName>
        </recommendedName>
    </component>
    <component>
        <recommendedName>
            <fullName>p12</fullName>
        </recommendedName>
    </component>
    <component>
        <recommendedName>
            <fullName>Capsid protein p27</fullName>
        </recommendedName>
    </component>
    <component>
        <recommendedName>
            <fullName>Nucleocapsid protein p14</fullName>
        </recommendedName>
    </component>
    <component>
        <recommendedName>
            <fullName>p4</fullName>
        </recommendedName>
    </component>
</protein>
<sequence>MGHTHSRQLFVHMLSVMLKHRGITVSKTKLINFLSFIEEVCPWFPREGTVNLETWKKVGEQIRTHYTLHGPEKVPVETLSFWTLIRDCLDFDNDELKRLGNLLKQEEDPLHTPDSVPSYDPPPPPPPSLKMHPSDNDDSLSSTDEAELDEEAAKYHQEDWGFLAQEKGALTSKDELVECFKNLTIALQNAGIQLPSNNNTFPSAPPFPPAYTPTVMAGLDPPPGFPPPSKHMSPLQKALRQAQRLGEVVSDFSLAFPVFENNNQRYYESLPFKQLKELKIACSQYGPTAPFTIAMIESLGTQALPPNDWKQTARACLSGGDYLLWKSEFFEQCARIADVNRQQGIQTSYEMLIGEGPYQATDTQLNFLPGAYAQISNAARQAWKKLPSSSTKTEDLSKVRQGPDEPYQDFVARLLDTIGKIMSDEKAGMVLAKQLAFENANSACQAALRPYRKKGDLSDFIRICADIGPSYMQGIAMAAALQGKSIKEVLFQQQARNKKGLQKSGNSGCFVCGQPGHRAAVCPQKHQTSVNTPNLCPRCKKGKHWARDCRSKTDVQGNPLPPVSGNWVRGQPLAPKQCYGATLQVPKEPLQTSVEPQEAARDWTSVPPPIQY</sequence>
<accession>P31622</accession>
<accession>Q9WR75</accession>
<comment type="function">
    <molecule>Matrix protein p10</molecule>
    <text evidence="6">Matrix protein.</text>
</comment>
<comment type="function">
    <molecule>Nucleocapsid protein p14</molecule>
    <text evidence="6">Nucleocapsid protein.</text>
</comment>
<comment type="function">
    <molecule>Capsid protein p27</molecule>
    <text evidence="1">Capsid protein.</text>
</comment>
<comment type="subcellular location">
    <molecule>Matrix protein p10</molecule>
    <subcellularLocation>
        <location evidence="6">Virion</location>
    </subcellularLocation>
</comment>
<comment type="subcellular location">
    <molecule>Capsid protein p27</molecule>
    <subcellularLocation>
        <location evidence="6">Virion</location>
    </subcellularLocation>
</comment>
<comment type="subcellular location">
    <molecule>Nucleocapsid protein p14</molecule>
    <subcellularLocation>
        <location evidence="6">Virion</location>
    </subcellularLocation>
</comment>
<comment type="alternative products">
    <event type="ribosomal frameshifting"/>
    <isoform>
        <id>P31622-1</id>
        <name>Gag polyprotein</name>
        <sequence type="displayed"/>
    </isoform>
    <isoform>
        <id>P31625-1</id>
        <name>Gag-Pro polyprotein</name>
        <sequence type="external"/>
    </isoform>
    <isoform>
        <id>P31623-1</id>
        <name>Gag-Pro-Pol polyprotein</name>
        <sequence type="external"/>
    </isoform>
</comment>
<comment type="domain">
    <molecule>Gag polyprotein</molecule>
    <text evidence="1">Late-budding domains (L domains) are short sequence motifs essential for viral particle release. They can occur individually or in close proximity within structural proteins. They interacts with sorting cellular proteins of the multivesicular body (MVB) pathway. Most of these proteins are class E vacuolar protein sorting factors belonging to ESCRT-I, ESCRT-II or ESCRT-III complexes. Gag-p12 contains two L domains: a PTAP/PSAP motif which interacts with the UEV domain of TSG101, and a PPXY motif which binds to the WW domains of the ubiquitin ligase NEDD4. Gag-p27 contains one L domain: a PTAP/PSAP motif which interacts with the UEV domain of TSG101.</text>
</comment>
<comment type="PTM">
    <molecule>Gag polyprotein</molecule>
    <text evidence="2">Myristoylated. Myristoylation of the matrix (MA) domain mediates the transport and binding of Gag polyproteins to the host plasma membrane and is required for the assembly of viral particles.</text>
</comment>
<comment type="PTM">
    <molecule>Gag polyprotein</molecule>
    <text evidence="1">Specific enzymatic cleavages in vivo yield mature proteins.</text>
</comment>
<comment type="miscellaneous">
    <molecule>Isoform Gag polyprotein</molecule>
    <text evidence="7">Produced by conventional translation.</text>
</comment>
<feature type="initiator methionine" description="Removed; by host" evidence="1">
    <location>
        <position position="1"/>
    </location>
</feature>
<feature type="chain" id="PRO_0000443121" description="Gag polyprotein">
    <location>
        <begin position="2"/>
        <end position="612"/>
    </location>
</feature>
<feature type="chain" id="PRO_0000040867" description="Matrix protein p10">
    <location>
        <begin position="2"/>
        <end position="99"/>
    </location>
</feature>
<feature type="chain" id="PRO_0000040868" description="Phosphorylated protein pp24">
    <location>
        <begin position="100"/>
        <end position="168" status="uncertain"/>
    </location>
</feature>
<feature type="chain" id="PRO_0000040869" description="p12">
    <location>
        <begin position="169" status="uncertain"/>
        <end position="256"/>
    </location>
</feature>
<feature type="chain" id="PRO_0000040870" description="Capsid protein p27">
    <location>
        <begin position="257"/>
        <end position="477"/>
    </location>
</feature>
<feature type="chain" id="PRO_0000040871" description="Nucleocapsid protein p14">
    <location>
        <begin position="478"/>
        <end position="579"/>
    </location>
</feature>
<feature type="chain" id="PRO_0000040872" description="p4">
    <location>
        <begin position="580"/>
        <end position="612"/>
    </location>
</feature>
<feature type="zinc finger region" description="CCHC-type 1" evidence="3">
    <location>
        <begin position="507"/>
        <end position="524"/>
    </location>
</feature>
<feature type="zinc finger region" description="CCHC-type 2" evidence="3">
    <location>
        <begin position="534"/>
        <end position="551"/>
    </location>
</feature>
<feature type="region of interest" description="Disordered" evidence="4">
    <location>
        <begin position="103"/>
        <end position="148"/>
    </location>
</feature>
<feature type="region of interest" description="Disordered" evidence="4">
    <location>
        <begin position="589"/>
        <end position="612"/>
    </location>
</feature>
<feature type="short sequence motif" description="PTAP/PSAP motif" evidence="6">
    <location>
        <begin position="202"/>
        <end position="205"/>
    </location>
</feature>
<feature type="short sequence motif" description="PPXY motif" evidence="6">
    <location>
        <begin position="208"/>
        <end position="211"/>
    </location>
</feature>
<feature type="short sequence motif" description="PTAP/PSAP motif" evidence="2">
    <location>
        <begin position="287"/>
        <end position="290"/>
    </location>
</feature>
<feature type="compositionally biased region" description="Pro residues" evidence="4">
    <location>
        <begin position="119"/>
        <end position="128"/>
    </location>
</feature>
<feature type="site" description="Cleavage; by viral protease" evidence="1">
    <location>
        <begin position="99"/>
        <end position="100"/>
    </location>
</feature>
<feature type="site" description="Cleavage; by viral protease" evidence="1">
    <location>
        <begin position="129"/>
        <end position="130"/>
    </location>
</feature>
<feature type="site" description="Cleavage; by viral protease" evidence="1">
    <location>
        <begin position="168"/>
        <end position="169"/>
    </location>
</feature>
<feature type="site" description="Cleavage; by viral protease" evidence="1">
    <location>
        <begin position="256"/>
        <end position="257"/>
    </location>
</feature>
<feature type="site" description="Cleavage; by viral protease" evidence="1">
    <location>
        <begin position="477"/>
        <end position="478"/>
    </location>
</feature>
<feature type="site" description="Cleavage; by viral protease" evidence="1">
    <location>
        <begin position="579"/>
        <end position="580"/>
    </location>
</feature>
<feature type="lipid moiety-binding region" description="N-myristoyl glycine; by host" evidence="2">
    <location>
        <position position="2"/>
    </location>
</feature>
<feature type="sequence variant" description="In strain: JSRV-21." evidence="5">
    <original>H</original>
    <variation>Q</variation>
    <location>
        <position position="3"/>
    </location>
</feature>
<feature type="sequence variant" description="In strain: JSRV-21." evidence="5">
    <original>T</original>
    <variation>P</variation>
    <location>
        <position position="28"/>
    </location>
</feature>
<feature type="sequence variant" description="In strain: JSRV-21." evidence="5">
    <original>V</original>
    <variation>G</variation>
    <location>
        <position position="116"/>
    </location>
</feature>
<feature type="sequence variant" description="In strain: JSRV-21." evidence="5">
    <original>S</original>
    <variation>L</variation>
    <location>
        <position position="139"/>
    </location>
</feature>
<feature type="sequence variant" description="In strain: JSRV-21." evidence="5">
    <original>QLPSN</original>
    <variation>SLPH</variation>
    <location>
        <begin position="193"/>
        <end position="197"/>
    </location>
</feature>
<feature type="sequence variant" description="In strain: JSRV-21." evidence="5">
    <original>T</original>
    <variation>S</variation>
    <location>
        <position position="214"/>
    </location>
</feature>
<feature type="sequence variant" description="In strain: JSRV-21." evidence="5">
    <original>K</original>
    <variation>R</variation>
    <location>
        <position position="237"/>
    </location>
</feature>
<feature type="sequence variant" description="In strain: JSRV-21." evidence="5">
    <original>S</original>
    <variation>N</variation>
    <location>
        <position position="298"/>
    </location>
</feature>
<feature type="sequence variant" description="In strain: JSRV-21." evidence="5">
    <original>K</original>
    <variation>R</variation>
    <location>
        <position position="385"/>
    </location>
</feature>
<feature type="sequence variant" description="In strain: JSRV-21." evidence="5">
    <original>HQTS</original>
    <variation>QQGP</variation>
    <location>
        <begin position="526"/>
        <end position="529"/>
    </location>
</feature>
<feature type="strand" evidence="9">
    <location>
        <begin position="258"/>
        <end position="260"/>
    </location>
</feature>
<feature type="strand" evidence="9">
    <location>
        <begin position="265"/>
        <end position="267"/>
    </location>
</feature>
<feature type="helix" evidence="9">
    <location>
        <begin position="272"/>
        <end position="284"/>
    </location>
</feature>
<feature type="helix" evidence="9">
    <location>
        <begin position="290"/>
        <end position="300"/>
    </location>
</feature>
<feature type="helix" evidence="9">
    <location>
        <begin position="306"/>
        <end position="316"/>
    </location>
</feature>
<feature type="helix" evidence="9">
    <location>
        <begin position="319"/>
        <end position="343"/>
    </location>
</feature>
<feature type="helix" evidence="9">
    <location>
        <begin position="349"/>
        <end position="353"/>
    </location>
</feature>
<feature type="helix" evidence="9">
    <location>
        <begin position="356"/>
        <end position="358"/>
    </location>
</feature>
<feature type="helix" evidence="9">
    <location>
        <begin position="361"/>
        <end position="363"/>
    </location>
</feature>
<feature type="strand" evidence="9">
    <location>
        <begin position="364"/>
        <end position="367"/>
    </location>
</feature>
<feature type="helix" evidence="9">
    <location>
        <begin position="371"/>
        <end position="384"/>
    </location>
</feature>
<dbReference type="EMBL" id="M80216">
    <property type="protein sequence ID" value="AAA89180.1"/>
    <property type="molecule type" value="Genomic_RNA"/>
</dbReference>
<dbReference type="EMBL" id="AF105220">
    <property type="protein sequence ID" value="AAD45224.1"/>
    <property type="molecule type" value="Genomic_DNA"/>
</dbReference>
<dbReference type="PIR" id="A42740">
    <property type="entry name" value="FOMVJA"/>
</dbReference>
<dbReference type="RefSeq" id="NP_041184.1">
    <molecule id="P31622-1"/>
    <property type="nucleotide sequence ID" value="NC_001494.1"/>
</dbReference>
<dbReference type="PDB" id="2V4X">
    <property type="method" value="X-ray"/>
    <property type="resolution" value="1.50 A"/>
    <property type="chains" value="A=257-388"/>
</dbReference>
<dbReference type="PDBsum" id="2V4X"/>
<dbReference type="SMR" id="P31622"/>
<dbReference type="GeneID" id="1490018"/>
<dbReference type="KEGG" id="vg:1490018"/>
<dbReference type="OrthoDB" id="1415at10239"/>
<dbReference type="EvolutionaryTrace" id="P31622"/>
<dbReference type="Proteomes" id="UP000007215">
    <property type="component" value="Genome"/>
</dbReference>
<dbReference type="GO" id="GO:0019013">
    <property type="term" value="C:viral nucleocapsid"/>
    <property type="evidence" value="ECO:0007669"/>
    <property type="project" value="UniProtKB-KW"/>
</dbReference>
<dbReference type="GO" id="GO:0003676">
    <property type="term" value="F:nucleic acid binding"/>
    <property type="evidence" value="ECO:0007669"/>
    <property type="project" value="InterPro"/>
</dbReference>
<dbReference type="GO" id="GO:0039660">
    <property type="term" value="F:structural constituent of virion"/>
    <property type="evidence" value="ECO:0007669"/>
    <property type="project" value="UniProtKB-KW"/>
</dbReference>
<dbReference type="GO" id="GO:0008270">
    <property type="term" value="F:zinc ion binding"/>
    <property type="evidence" value="ECO:0007669"/>
    <property type="project" value="UniProtKB-KW"/>
</dbReference>
<dbReference type="GO" id="GO:0039702">
    <property type="term" value="P:viral budding via host ESCRT complex"/>
    <property type="evidence" value="ECO:0007669"/>
    <property type="project" value="UniProtKB-KW"/>
</dbReference>
<dbReference type="GO" id="GO:0075523">
    <property type="term" value="P:viral translational frameshifting"/>
    <property type="evidence" value="ECO:0007669"/>
    <property type="project" value="UniProtKB-KW"/>
</dbReference>
<dbReference type="Gene3D" id="1.10.1200.30">
    <property type="match status" value="1"/>
</dbReference>
<dbReference type="Gene3D" id="1.10.375.10">
    <property type="entry name" value="Human Immunodeficiency Virus Type 1 Capsid Protein"/>
    <property type="match status" value="1"/>
</dbReference>
<dbReference type="Gene3D" id="1.10.150.490">
    <property type="entry name" value="Retroviral GAG p10 protein"/>
    <property type="match status" value="1"/>
</dbReference>
<dbReference type="Gene3D" id="4.10.60.10">
    <property type="entry name" value="Zinc finger, CCHC-type"/>
    <property type="match status" value="1"/>
</dbReference>
<dbReference type="InterPro" id="IPR003322">
    <property type="entry name" value="B_retro_matrix"/>
</dbReference>
<dbReference type="InterPro" id="IPR038124">
    <property type="entry name" value="B_retro_matrix_sf"/>
</dbReference>
<dbReference type="InterPro" id="IPR045345">
    <property type="entry name" value="Gag_p24_C"/>
</dbReference>
<dbReference type="InterPro" id="IPR050195">
    <property type="entry name" value="Primate_lentivir_Gag_pol-like"/>
</dbReference>
<dbReference type="InterPro" id="IPR008916">
    <property type="entry name" value="Retrov_capsid_C"/>
</dbReference>
<dbReference type="InterPro" id="IPR008919">
    <property type="entry name" value="Retrov_capsid_N"/>
</dbReference>
<dbReference type="InterPro" id="IPR010999">
    <property type="entry name" value="Retrovr_matrix"/>
</dbReference>
<dbReference type="InterPro" id="IPR001878">
    <property type="entry name" value="Znf_CCHC"/>
</dbReference>
<dbReference type="InterPro" id="IPR036875">
    <property type="entry name" value="Znf_CCHC_sf"/>
</dbReference>
<dbReference type="PANTHER" id="PTHR40389">
    <property type="entry name" value="ENDOGENOUS RETROVIRUS GROUP K MEMBER 24 GAG POLYPROTEIN-RELATED"/>
    <property type="match status" value="1"/>
</dbReference>
<dbReference type="PANTHER" id="PTHR40389:SF3">
    <property type="entry name" value="IGE-BINDING PROTEIN"/>
    <property type="match status" value="1"/>
</dbReference>
<dbReference type="Pfam" id="PF02337">
    <property type="entry name" value="Gag_p10"/>
    <property type="match status" value="1"/>
</dbReference>
<dbReference type="Pfam" id="PF00607">
    <property type="entry name" value="Gag_p24"/>
    <property type="match status" value="1"/>
</dbReference>
<dbReference type="Pfam" id="PF19317">
    <property type="entry name" value="Gag_p24_C"/>
    <property type="match status" value="1"/>
</dbReference>
<dbReference type="Pfam" id="PF00098">
    <property type="entry name" value="zf-CCHC"/>
    <property type="match status" value="1"/>
</dbReference>
<dbReference type="Pfam" id="PF14787">
    <property type="entry name" value="zf-CCHC_5"/>
    <property type="match status" value="1"/>
</dbReference>
<dbReference type="SMART" id="SM00343">
    <property type="entry name" value="ZnF_C2HC"/>
    <property type="match status" value="2"/>
</dbReference>
<dbReference type="SUPFAM" id="SSF47836">
    <property type="entry name" value="Retroviral matrix proteins"/>
    <property type="match status" value="1"/>
</dbReference>
<dbReference type="SUPFAM" id="SSF47353">
    <property type="entry name" value="Retrovirus capsid dimerization domain-like"/>
    <property type="match status" value="1"/>
</dbReference>
<dbReference type="SUPFAM" id="SSF47943">
    <property type="entry name" value="Retrovirus capsid protein, N-terminal core domain"/>
    <property type="match status" value="1"/>
</dbReference>
<dbReference type="SUPFAM" id="SSF57756">
    <property type="entry name" value="Retrovirus zinc finger-like domains"/>
    <property type="match status" value="2"/>
</dbReference>
<dbReference type="PROSITE" id="PS50158">
    <property type="entry name" value="ZF_CCHC"/>
    <property type="match status" value="1"/>
</dbReference>
<organism>
    <name type="scientific">Sheep pulmonary adenomatosis virus</name>
    <name type="common">Jaagsiekte sheep retrovirus</name>
    <name type="synonym">JSRV</name>
    <dbReference type="NCBI Taxonomy" id="11746"/>
    <lineage>
        <taxon>Viruses</taxon>
        <taxon>Riboviria</taxon>
        <taxon>Pararnavirae</taxon>
        <taxon>Artverviricota</taxon>
        <taxon>Revtraviricetes</taxon>
        <taxon>Ortervirales</taxon>
        <taxon>Retroviridae</taxon>
        <taxon>Orthoretrovirinae</taxon>
        <taxon>Betaretrovirus</taxon>
    </lineage>
</organism>
<proteinExistence type="evidence at protein level"/>
<gene>
    <name type="primary">gag</name>
</gene>
<name>GAG_JSRV</name>
<evidence type="ECO:0000250" key="1">
    <source>
        <dbReference type="UniProtKB" id="P07567"/>
    </source>
</evidence>
<evidence type="ECO:0000250" key="2">
    <source>
        <dbReference type="UniProtKB" id="P10258"/>
    </source>
</evidence>
<evidence type="ECO:0000255" key="3">
    <source>
        <dbReference type="PROSITE-ProRule" id="PRU00047"/>
    </source>
</evidence>
<evidence type="ECO:0000256" key="4">
    <source>
        <dbReference type="SAM" id="MobiDB-lite"/>
    </source>
</evidence>
<evidence type="ECO:0000269" key="5">
    <source>
    </source>
</evidence>
<evidence type="ECO:0000305" key="6"/>
<evidence type="ECO:0000305" key="7">
    <source>
    </source>
</evidence>
<evidence type="ECO:0007744" key="8">
    <source>
        <dbReference type="PDB" id="2V4X"/>
    </source>
</evidence>
<evidence type="ECO:0007829" key="9">
    <source>
        <dbReference type="PDB" id="2V4X"/>
    </source>
</evidence>
<reference key="1">
    <citation type="journal article" date="1992" name="J. Virol.">
        <title>Nucleotide sequence of the jaagsiekte retrovirus, an exogenous and endogenous type D and B retrovirus of sheep and goats.</title>
        <authorList>
            <person name="York D.F."/>
            <person name="Vigne R."/>
            <person name="Verwoerd D.W."/>
            <person name="Querat G."/>
        </authorList>
    </citation>
    <scope>NUCLEOTIDE SEQUENCE [GENOMIC RNA]</scope>
    <source>
        <strain>JSRV-SA</strain>
    </source>
</reference>
<reference key="2">
    <citation type="journal article" date="1999" name="J. Virol.">
        <title>Jaagsiekte sheep retrovirus is necessary and sufficient to induce a contagious lung cancer in sheep.</title>
        <authorList>
            <person name="Palmarini M."/>
            <person name="Sharp J.M."/>
            <person name="de las Heras M."/>
            <person name="Fan H."/>
        </authorList>
    </citation>
    <scope>NUCLEOTIDE SEQUENCE [GENOMIC RNA]</scope>
    <source>
        <strain>JSRV-21</strain>
    </source>
</reference>
<reference key="3">
    <citation type="journal article" date="2013" name="Biomed. Res. Int.">
        <title>A genome-wide analysis of RNA pseudoknots that stimulate efficient -1 ribosomal frameshifting or readthrough in animal viruses.</title>
        <authorList>
            <person name="Huang X."/>
            <person name="Cheng Q."/>
            <person name="Du Z."/>
        </authorList>
    </citation>
    <scope>RIBOSOMAL FRAMESHIFT</scope>
</reference>
<reference evidence="8" key="4">
    <citation type="journal article" date="2009" name="J. Mol. Biol.">
        <title>Structure of the capsid amino-terminal domain from the betaretrovirus, Jaagsiekte sheep retrovirus.</title>
        <authorList>
            <person name="Mortuza G.B."/>
            <person name="Goldstone D.C."/>
            <person name="Pashley C."/>
            <person name="Haire L.F."/>
            <person name="Palmarini M."/>
            <person name="Taylor W.R."/>
            <person name="Stoye J.P."/>
            <person name="Taylor I.A."/>
        </authorList>
    </citation>
    <scope>X-RAY CRYSTALLOGRAPHY (1.50 ANGSTROMS) OF 257-388</scope>
    <source>
        <strain>JSRV-21</strain>
    </source>
</reference>
<organismHost>
    <name type="scientific">Ovis aries</name>
    <name type="common">Sheep</name>
    <dbReference type="NCBI Taxonomy" id="9940"/>
</organismHost>
<keyword id="KW-0002">3D-structure</keyword>
<keyword id="KW-0167">Capsid protein</keyword>
<keyword id="KW-0175">Coiled coil</keyword>
<keyword id="KW-0945">Host-virus interaction</keyword>
<keyword id="KW-0449">Lipoprotein</keyword>
<keyword id="KW-0479">Metal-binding</keyword>
<keyword id="KW-0519">Myristate</keyword>
<keyword id="KW-0597">Phosphoprotein</keyword>
<keyword id="KW-0677">Repeat</keyword>
<keyword id="KW-0688">Ribosomal frameshifting</keyword>
<keyword id="KW-1198">Viral budding</keyword>
<keyword id="KW-1187">Viral budding via the host ESCRT complexes</keyword>
<keyword id="KW-0468">Viral matrix protein</keyword>
<keyword id="KW-0543">Viral nucleoprotein</keyword>
<keyword id="KW-1188">Viral release from host cell</keyword>
<keyword id="KW-0946">Virion</keyword>
<keyword id="KW-0862">Zinc</keyword>
<keyword id="KW-0863">Zinc-finger</keyword>